<evidence type="ECO:0000250" key="1"/>
<evidence type="ECO:0000250" key="2">
    <source>
        <dbReference type="UniProtKB" id="Q14197"/>
    </source>
</evidence>
<evidence type="ECO:0000255" key="3"/>
<evidence type="ECO:0000305" key="4"/>
<protein>
    <recommendedName>
        <fullName evidence="4">Large ribosomal subunit protein mL62</fullName>
    </recommendedName>
    <alternativeName>
        <fullName>Immature colon carcinoma transcript 1 protein homolog</fullName>
    </alternativeName>
    <alternativeName>
        <fullName>Peptidyl-tRNA hydrolase ICT1, mitochondrial</fullName>
        <ecNumber>3.1.1.29</ecNumber>
    </alternativeName>
</protein>
<name>ICT1_AILME</name>
<comment type="function">
    <text evidence="1">Essential peptidyl-tRNA hydrolase component of the mitochondrial large ribosomal subunit. Acts as a codon-independent translation release factor that has lost all stop codon specificity and directs the termination of translation in mitochondrion, possibly in case of abortive elongation. May be involved in the hydrolysis of peptidyl-tRNAs that have been prematurely terminated and thus in the recycling of stalled mitochondrial ribosomes (By similarity).</text>
</comment>
<comment type="catalytic activity">
    <reaction>
        <text>an N-acyl-L-alpha-aminoacyl-tRNA + H2O = an N-acyl-L-amino acid + a tRNA + H(+)</text>
        <dbReference type="Rhea" id="RHEA:54448"/>
        <dbReference type="Rhea" id="RHEA-COMP:10123"/>
        <dbReference type="Rhea" id="RHEA-COMP:13883"/>
        <dbReference type="ChEBI" id="CHEBI:15377"/>
        <dbReference type="ChEBI" id="CHEBI:15378"/>
        <dbReference type="ChEBI" id="CHEBI:59874"/>
        <dbReference type="ChEBI" id="CHEBI:78442"/>
        <dbReference type="ChEBI" id="CHEBI:138191"/>
        <dbReference type="EC" id="3.1.1.29"/>
    </reaction>
</comment>
<comment type="subunit">
    <text evidence="1">Component of the mitochondrial 39S ribosomal subunit.</text>
</comment>
<comment type="subcellular location">
    <subcellularLocation>
        <location evidence="1">Mitochondrion</location>
    </subcellularLocation>
</comment>
<comment type="similarity">
    <text evidence="4">Belongs to the prokaryotic/mitochondrial release factor family. Mitochondrion-specific ribosomal protein mL62 subfamily.</text>
</comment>
<comment type="caution">
    <text evidence="4">In contrast to other members of the family, lacks the regions that come into close contact with the mRNA in the ribosomal A-site and determine the STOP codon specificity, explaining the loss of codon specificity for translation release factor activity.</text>
</comment>
<keyword id="KW-0378">Hydrolase</keyword>
<keyword id="KW-0496">Mitochondrion</keyword>
<keyword id="KW-0648">Protein biosynthesis</keyword>
<keyword id="KW-1185">Reference proteome</keyword>
<keyword id="KW-0687">Ribonucleoprotein</keyword>
<keyword id="KW-0689">Ribosomal protein</keyword>
<keyword id="KW-0809">Transit peptide</keyword>
<proteinExistence type="inferred from homology"/>
<feature type="transit peptide" description="Mitochondrion" evidence="3">
    <location>
        <begin position="1"/>
        <end position="29"/>
    </location>
</feature>
<feature type="chain" id="PRO_0000394241" description="Large ribosomal subunit protein mL62">
    <location>
        <begin position="30"/>
        <end position="206"/>
    </location>
</feature>
<dbReference type="EC" id="3.1.1.29"/>
<dbReference type="EMBL" id="GL192703">
    <property type="protein sequence ID" value="EFB25606.1"/>
    <property type="molecule type" value="Genomic_DNA"/>
</dbReference>
<dbReference type="RefSeq" id="XP_002919882.1">
    <property type="nucleotide sequence ID" value="XM_002919836.4"/>
</dbReference>
<dbReference type="SMR" id="D2HD32"/>
<dbReference type="STRING" id="9646.ENSAMEP00000009573"/>
<dbReference type="Ensembl" id="ENSAMET00000033921.1">
    <property type="protein sequence ID" value="ENSAMEP00000026977.1"/>
    <property type="gene ID" value="ENSAMEG00000027504.1"/>
</dbReference>
<dbReference type="GeneID" id="100466987"/>
<dbReference type="KEGG" id="aml:100466987"/>
<dbReference type="CTD" id="3396"/>
<dbReference type="eggNOG" id="KOG3429">
    <property type="taxonomic scope" value="Eukaryota"/>
</dbReference>
<dbReference type="GeneTree" id="ENSGT00390000013268"/>
<dbReference type="HOGENOM" id="CLU_089470_6_1_1"/>
<dbReference type="InParanoid" id="D2HD32"/>
<dbReference type="OMA" id="GGQNVNC"/>
<dbReference type="OrthoDB" id="270639at2759"/>
<dbReference type="TreeFam" id="TF315161"/>
<dbReference type="Proteomes" id="UP000008912">
    <property type="component" value="Unassembled WGS sequence"/>
</dbReference>
<dbReference type="GO" id="GO:0005762">
    <property type="term" value="C:mitochondrial large ribosomal subunit"/>
    <property type="evidence" value="ECO:0000250"/>
    <property type="project" value="UniProtKB"/>
</dbReference>
<dbReference type="GO" id="GO:0005739">
    <property type="term" value="C:mitochondrion"/>
    <property type="evidence" value="ECO:0000250"/>
    <property type="project" value="UniProtKB"/>
</dbReference>
<dbReference type="GO" id="GO:0004045">
    <property type="term" value="F:peptidyl-tRNA hydrolase activity"/>
    <property type="evidence" value="ECO:0000250"/>
    <property type="project" value="UniProtKB"/>
</dbReference>
<dbReference type="GO" id="GO:0016150">
    <property type="term" value="F:translation release factor activity, codon nonspecific"/>
    <property type="evidence" value="ECO:0000250"/>
    <property type="project" value="UniProtKB"/>
</dbReference>
<dbReference type="GO" id="GO:0070126">
    <property type="term" value="P:mitochondrial translational termination"/>
    <property type="evidence" value="ECO:0000250"/>
    <property type="project" value="UniProtKB"/>
</dbReference>
<dbReference type="FunFam" id="3.30.160.20:FF:000050">
    <property type="entry name" value="Peptidyl-tRNA hydrolase ICT1, mitochondrial"/>
    <property type="match status" value="1"/>
</dbReference>
<dbReference type="Gene3D" id="3.30.160.20">
    <property type="match status" value="1"/>
</dbReference>
<dbReference type="InterPro" id="IPR052104">
    <property type="entry name" value="Mito_Release_Factor_mL62"/>
</dbReference>
<dbReference type="InterPro" id="IPR000352">
    <property type="entry name" value="Pep_chain_release_fac_I"/>
</dbReference>
<dbReference type="PANTHER" id="PTHR11075:SF54">
    <property type="entry name" value="LARGE RIBOSOMAL SUBUNIT PROTEIN ML62"/>
    <property type="match status" value="1"/>
</dbReference>
<dbReference type="PANTHER" id="PTHR11075">
    <property type="entry name" value="PEPTIDE CHAIN RELEASE FACTOR"/>
    <property type="match status" value="1"/>
</dbReference>
<dbReference type="Pfam" id="PF00472">
    <property type="entry name" value="RF-1"/>
    <property type="match status" value="1"/>
</dbReference>
<dbReference type="SUPFAM" id="SSF110916">
    <property type="entry name" value="Peptidyl-tRNA hydrolase domain-like"/>
    <property type="match status" value="1"/>
</dbReference>
<gene>
    <name evidence="2" type="primary">MRPL58</name>
    <name type="synonym">ICT1</name>
    <name type="ORF">PANDA_008549</name>
</gene>
<sequence length="206" mass="23697">MATAWCLPWTLRRAGAWLLTPPLRCPRRALHKQADGTEFQSIYSLDKLYPESRGSDTAWKVPDDAQQTNKDIPLDRLTISYCRSSGPGGQNVNKVNSKAEVRFHLATAEWIAEPVRQKMAIMHKNKINRSGELILTSECSRYQFRNLADCLQKIRDMIAEASQTPKEPSKEDAALHRIRIENMNRERLRKKRIHSAIKTGRRVDMD</sequence>
<organism>
    <name type="scientific">Ailuropoda melanoleuca</name>
    <name type="common">Giant panda</name>
    <dbReference type="NCBI Taxonomy" id="9646"/>
    <lineage>
        <taxon>Eukaryota</taxon>
        <taxon>Metazoa</taxon>
        <taxon>Chordata</taxon>
        <taxon>Craniata</taxon>
        <taxon>Vertebrata</taxon>
        <taxon>Euteleostomi</taxon>
        <taxon>Mammalia</taxon>
        <taxon>Eutheria</taxon>
        <taxon>Laurasiatheria</taxon>
        <taxon>Carnivora</taxon>
        <taxon>Caniformia</taxon>
        <taxon>Ursidae</taxon>
        <taxon>Ailuropoda</taxon>
    </lineage>
</organism>
<reference key="1">
    <citation type="journal article" date="2010" name="Nature">
        <title>The sequence and de novo assembly of the giant panda genome.</title>
        <authorList>
            <person name="Li R."/>
            <person name="Fan W."/>
            <person name="Tian G."/>
            <person name="Zhu H."/>
            <person name="He L."/>
            <person name="Cai J."/>
            <person name="Huang Q."/>
            <person name="Cai Q."/>
            <person name="Li B."/>
            <person name="Bai Y."/>
            <person name="Zhang Z."/>
            <person name="Zhang Y."/>
            <person name="Wang W."/>
            <person name="Li J."/>
            <person name="Wei F."/>
            <person name="Li H."/>
            <person name="Jian M."/>
            <person name="Li J."/>
            <person name="Zhang Z."/>
            <person name="Nielsen R."/>
            <person name="Li D."/>
            <person name="Gu W."/>
            <person name="Yang Z."/>
            <person name="Xuan Z."/>
            <person name="Ryder O.A."/>
            <person name="Leung F.C."/>
            <person name="Zhou Y."/>
            <person name="Cao J."/>
            <person name="Sun X."/>
            <person name="Fu Y."/>
            <person name="Fang X."/>
            <person name="Guo X."/>
            <person name="Wang B."/>
            <person name="Hou R."/>
            <person name="Shen F."/>
            <person name="Mu B."/>
            <person name="Ni P."/>
            <person name="Lin R."/>
            <person name="Qian W."/>
            <person name="Wang G."/>
            <person name="Yu C."/>
            <person name="Nie W."/>
            <person name="Wang J."/>
            <person name="Wu Z."/>
            <person name="Liang H."/>
            <person name="Min J."/>
            <person name="Wu Q."/>
            <person name="Cheng S."/>
            <person name="Ruan J."/>
            <person name="Wang M."/>
            <person name="Shi Z."/>
            <person name="Wen M."/>
            <person name="Liu B."/>
            <person name="Ren X."/>
            <person name="Zheng H."/>
            <person name="Dong D."/>
            <person name="Cook K."/>
            <person name="Shan G."/>
            <person name="Zhang H."/>
            <person name="Kosiol C."/>
            <person name="Xie X."/>
            <person name="Lu Z."/>
            <person name="Zheng H."/>
            <person name="Li Y."/>
            <person name="Steiner C.C."/>
            <person name="Lam T.T."/>
            <person name="Lin S."/>
            <person name="Zhang Q."/>
            <person name="Li G."/>
            <person name="Tian J."/>
            <person name="Gong T."/>
            <person name="Liu H."/>
            <person name="Zhang D."/>
            <person name="Fang L."/>
            <person name="Ye C."/>
            <person name="Zhang J."/>
            <person name="Hu W."/>
            <person name="Xu A."/>
            <person name="Ren Y."/>
            <person name="Zhang G."/>
            <person name="Bruford M.W."/>
            <person name="Li Q."/>
            <person name="Ma L."/>
            <person name="Guo Y."/>
            <person name="An N."/>
            <person name="Hu Y."/>
            <person name="Zheng Y."/>
            <person name="Shi Y."/>
            <person name="Li Z."/>
            <person name="Liu Q."/>
            <person name="Chen Y."/>
            <person name="Zhao J."/>
            <person name="Qu N."/>
            <person name="Zhao S."/>
            <person name="Tian F."/>
            <person name="Wang X."/>
            <person name="Wang H."/>
            <person name="Xu L."/>
            <person name="Liu X."/>
            <person name="Vinar T."/>
            <person name="Wang Y."/>
            <person name="Lam T.W."/>
            <person name="Yiu S.M."/>
            <person name="Liu S."/>
            <person name="Zhang H."/>
            <person name="Li D."/>
            <person name="Huang Y."/>
            <person name="Wang X."/>
            <person name="Yang G."/>
            <person name="Jiang Z."/>
            <person name="Wang J."/>
            <person name="Qin N."/>
            <person name="Li L."/>
            <person name="Li J."/>
            <person name="Bolund L."/>
            <person name="Kristiansen K."/>
            <person name="Wong G.K."/>
            <person name="Olson M."/>
            <person name="Zhang X."/>
            <person name="Li S."/>
            <person name="Yang H."/>
            <person name="Wang J."/>
            <person name="Wang J."/>
        </authorList>
    </citation>
    <scope>NUCLEOTIDE SEQUENCE [LARGE SCALE GENOMIC DNA]</scope>
</reference>
<accession>D2HD32</accession>